<proteinExistence type="evidence at transcript level"/>
<keyword id="KW-0202">Cytokine</keyword>
<keyword id="KW-1015">Disulfide bond</keyword>
<keyword id="KW-0325">Glycoprotein</keyword>
<keyword id="KW-0393">Immunoglobulin domain</keyword>
<keyword id="KW-0732">Signal</keyword>
<protein>
    <recommendedName>
        <fullName>Interleukin-12 subunit beta</fullName>
        <shortName>IL-12B</shortName>
    </recommendedName>
    <alternativeName>
        <fullName>Cytotoxic lymphocyte maturation factor 40 kDa subunit</fullName>
        <shortName>CLMF p40</shortName>
    </alternativeName>
    <alternativeName>
        <fullName>IL-12 subunit p40</fullName>
    </alternativeName>
</protein>
<dbReference type="EMBL" id="AY198121">
    <property type="protein sequence ID" value="AAO25629.1"/>
    <property type="molecule type" value="mRNA"/>
</dbReference>
<dbReference type="SMR" id="Q866G3"/>
<dbReference type="GlyCosmos" id="Q866G3">
    <property type="glycosylation" value="1 site, No reported glycans"/>
</dbReference>
<dbReference type="GO" id="GO:0005615">
    <property type="term" value="C:extracellular space"/>
    <property type="evidence" value="ECO:0007669"/>
    <property type="project" value="UniProtKB-KW"/>
</dbReference>
<dbReference type="GO" id="GO:0016020">
    <property type="term" value="C:membrane"/>
    <property type="evidence" value="ECO:0007669"/>
    <property type="project" value="InterPro"/>
</dbReference>
<dbReference type="GO" id="GO:0005125">
    <property type="term" value="F:cytokine activity"/>
    <property type="evidence" value="ECO:0007669"/>
    <property type="project" value="UniProtKB-KW"/>
</dbReference>
<dbReference type="GO" id="GO:0004896">
    <property type="term" value="F:cytokine receptor activity"/>
    <property type="evidence" value="ECO:0007669"/>
    <property type="project" value="InterPro"/>
</dbReference>
<dbReference type="CDD" id="cd00063">
    <property type="entry name" value="FN3"/>
    <property type="match status" value="1"/>
</dbReference>
<dbReference type="FunFam" id="2.60.40.10:FF:000959">
    <property type="entry name" value="Interleukin-12 subunit beta"/>
    <property type="match status" value="1"/>
</dbReference>
<dbReference type="FunFam" id="2.60.40.10:FF:001008">
    <property type="entry name" value="Interleukin-12 subunit beta"/>
    <property type="match status" value="1"/>
</dbReference>
<dbReference type="FunFam" id="2.60.40.10:FF:001009">
    <property type="entry name" value="Interleukin-12 subunit beta"/>
    <property type="match status" value="1"/>
</dbReference>
<dbReference type="Gene3D" id="2.60.40.10">
    <property type="entry name" value="Immunoglobulins"/>
    <property type="match status" value="3"/>
</dbReference>
<dbReference type="InterPro" id="IPR003961">
    <property type="entry name" value="FN3_dom"/>
</dbReference>
<dbReference type="InterPro" id="IPR036116">
    <property type="entry name" value="FN3_sf"/>
</dbReference>
<dbReference type="InterPro" id="IPR003530">
    <property type="entry name" value="Hematopoietin_rcpt_L_F3_CS"/>
</dbReference>
<dbReference type="InterPro" id="IPR007110">
    <property type="entry name" value="Ig-like_dom"/>
</dbReference>
<dbReference type="InterPro" id="IPR036179">
    <property type="entry name" value="Ig-like_dom_sf"/>
</dbReference>
<dbReference type="InterPro" id="IPR013783">
    <property type="entry name" value="Ig-like_fold"/>
</dbReference>
<dbReference type="InterPro" id="IPR003598">
    <property type="entry name" value="Ig_sub2"/>
</dbReference>
<dbReference type="InterPro" id="IPR050676">
    <property type="entry name" value="IL-12"/>
</dbReference>
<dbReference type="InterPro" id="IPR015528">
    <property type="entry name" value="IL-12_beta"/>
</dbReference>
<dbReference type="InterPro" id="IPR019482">
    <property type="entry name" value="IL-12_beta_cen-dom"/>
</dbReference>
<dbReference type="PANTHER" id="PTHR48485:SF4">
    <property type="entry name" value="INTERLEUKIN-12 SUBUNIT BETA"/>
    <property type="match status" value="1"/>
</dbReference>
<dbReference type="PANTHER" id="PTHR48485">
    <property type="entry name" value="INTERLEUKIN-12 SUBUNIT BETA-RELATED"/>
    <property type="match status" value="1"/>
</dbReference>
<dbReference type="Pfam" id="PF10420">
    <property type="entry name" value="IL12p40_C"/>
    <property type="match status" value="1"/>
</dbReference>
<dbReference type="PIRSF" id="PIRSF038007">
    <property type="entry name" value="IL_12_beta"/>
    <property type="match status" value="1"/>
</dbReference>
<dbReference type="PRINTS" id="PR01928">
    <property type="entry name" value="INTRLEUKN12B"/>
</dbReference>
<dbReference type="SMART" id="SM00408">
    <property type="entry name" value="IGc2"/>
    <property type="match status" value="1"/>
</dbReference>
<dbReference type="SUPFAM" id="SSF49265">
    <property type="entry name" value="Fibronectin type III"/>
    <property type="match status" value="2"/>
</dbReference>
<dbReference type="SUPFAM" id="SSF48726">
    <property type="entry name" value="Immunoglobulin"/>
    <property type="match status" value="1"/>
</dbReference>
<dbReference type="PROSITE" id="PS50853">
    <property type="entry name" value="FN3"/>
    <property type="match status" value="1"/>
</dbReference>
<dbReference type="PROSITE" id="PS01354">
    <property type="entry name" value="HEMATOPO_REC_L_F3"/>
    <property type="match status" value="1"/>
</dbReference>
<dbReference type="PROSITE" id="PS50835">
    <property type="entry name" value="IG_LIKE"/>
    <property type="match status" value="1"/>
</dbReference>
<sequence>MHPQQLVVSWFSLVLLASPIVAIWELEKNVYIVELDWYPDAPGETVVLTCDTPEEDGITWTSDQSSEVLGSGKTLTIQVKEFGDAGQYTCHKGGEALSRSLLLLHKKEDGIWSTDILKDQKEPKAKSFLKCEAKDYSGHFTCWWLTAISTDLKFSVKSSRGSADPRGVTCGAASLSAEKVSVDHREYNKYTVECQEGSTCPAAEESLLIEVVVEAVHKLKYENYTSSFFIRDIIKPDPPKNLQLKPLKNSRQVEVSWEYPDTWSTPHSYFSLTFCVQVQGKNKREKKLFMDQTSAKVTCHKDANVRVQARDRYYSSFWSEWASVSCS</sequence>
<gene>
    <name type="primary">IL12B</name>
</gene>
<organism>
    <name type="scientific">Bubalus bubalis</name>
    <name type="common">Domestic water buffalo</name>
    <dbReference type="NCBI Taxonomy" id="89462"/>
    <lineage>
        <taxon>Eukaryota</taxon>
        <taxon>Metazoa</taxon>
        <taxon>Chordata</taxon>
        <taxon>Craniata</taxon>
        <taxon>Vertebrata</taxon>
        <taxon>Euteleostomi</taxon>
        <taxon>Mammalia</taxon>
        <taxon>Eutheria</taxon>
        <taxon>Laurasiatheria</taxon>
        <taxon>Artiodactyla</taxon>
        <taxon>Ruminantia</taxon>
        <taxon>Pecora</taxon>
        <taxon>Bovidae</taxon>
        <taxon>Bovinae</taxon>
        <taxon>Bubalus</taxon>
    </lineage>
</organism>
<accession>Q866G3</accession>
<comment type="function">
    <text evidence="1">Cytokine that can act as a growth factor for activated T and NK cells, enhance the lytic activity of NK/lymphokine-activated killer cells, and stimulate the production of IFN-gamma by resting PBMC.</text>
</comment>
<comment type="function">
    <text evidence="1">Associates with IL23A to form the IL-23 interleukin, a heterodimeric cytokine which functions in innate and adaptive immunity. IL-23 may constitute with IL-17 an acute response to infection in peripheral tissues. IL-23 binds to a heterodimeric receptor complex composed of IL12RB1 and IL23R, activates the Jak-Stat signaling cascade, stimulates memory rather than naive T-cells and promotes production of pro-inflammatory cytokines. IL-23 induces autoimmune inflammation and thus may be responsible for autoimmune inflammatory diseases and may be important for tumorigenesis (By similarity).</text>
</comment>
<comment type="subunit">
    <text evidence="2 3">Heterodimer with IL12A; disulfide-linked. The heterodimer is known as interleukin IL-12. Heterodimer with IL23A; disulfide-linked. The heterodimer is known as interleukin IL-23. Also secreted as a monomer. Interacts with NBR1; this interaction promotes IL-12 secretion (By similarity).</text>
</comment>
<comment type="similarity">
    <text evidence="7">Belongs to the IL-12B family.</text>
</comment>
<feature type="signal peptide" evidence="1">
    <location>
        <begin position="1"/>
        <end position="22"/>
    </location>
</feature>
<feature type="chain" id="PRO_0000045044" description="Interleukin-12 subunit beta">
    <location>
        <begin position="23"/>
        <end position="327"/>
    </location>
</feature>
<feature type="domain" description="Ig-like C2-type">
    <location>
        <begin position="23"/>
        <end position="106"/>
    </location>
</feature>
<feature type="domain" description="Fibronectin type-III" evidence="6">
    <location>
        <begin position="238"/>
        <end position="327"/>
    </location>
</feature>
<feature type="glycosylation site" description="N-linked (GlcNAc...) asparagine" evidence="4">
    <location>
        <position position="223"/>
    </location>
</feature>
<feature type="disulfide bond" evidence="5">
    <location>
        <begin position="50"/>
        <end position="90"/>
    </location>
</feature>
<feature type="disulfide bond" description="Interchain" evidence="7">
    <location>
        <position position="200"/>
    </location>
</feature>
<evidence type="ECO:0000250" key="1"/>
<evidence type="ECO:0000250" key="2">
    <source>
        <dbReference type="UniProtKB" id="P29460"/>
    </source>
</evidence>
<evidence type="ECO:0000250" key="3">
    <source>
        <dbReference type="UniProtKB" id="P43432"/>
    </source>
</evidence>
<evidence type="ECO:0000255" key="4"/>
<evidence type="ECO:0000255" key="5">
    <source>
        <dbReference type="PROSITE-ProRule" id="PRU00114"/>
    </source>
</evidence>
<evidence type="ECO:0000255" key="6">
    <source>
        <dbReference type="PROSITE-ProRule" id="PRU00316"/>
    </source>
</evidence>
<evidence type="ECO:0000305" key="7"/>
<reference key="1">
    <citation type="journal article" date="2005" name="Eur. J. Immunogenet.">
        <title>Interleukin-12 subunits p35 and p40 of Indian water buffalo (Bubalus bubalis) maintain high sequence homology with those of other ruminants.</title>
        <authorList>
            <person name="Premraj A."/>
            <person name="Sreekumar E."/>
            <person name="Nautiyal B."/>
            <person name="Rasool T.J."/>
        </authorList>
    </citation>
    <scope>NUCLEOTIDE SEQUENCE [MRNA]</scope>
</reference>
<name>IL12B_BUBBU</name>